<evidence type="ECO:0000255" key="1">
    <source>
        <dbReference type="HAMAP-Rule" id="MF_01043"/>
    </source>
</evidence>
<comment type="function">
    <text evidence="1">Catalyzes the transfer of an acyl group from acyl-phosphate (acyl-PO(4)) to glycerol-3-phosphate (G3P) to form lysophosphatidic acid (LPA). This enzyme utilizes acyl-phosphate as fatty acyl donor, but not acyl-CoA or acyl-ACP.</text>
</comment>
<comment type="catalytic activity">
    <reaction evidence="1">
        <text>an acyl phosphate + sn-glycerol 3-phosphate = a 1-acyl-sn-glycero-3-phosphate + phosphate</text>
        <dbReference type="Rhea" id="RHEA:34075"/>
        <dbReference type="ChEBI" id="CHEBI:43474"/>
        <dbReference type="ChEBI" id="CHEBI:57597"/>
        <dbReference type="ChEBI" id="CHEBI:57970"/>
        <dbReference type="ChEBI" id="CHEBI:59918"/>
        <dbReference type="EC" id="2.3.1.275"/>
    </reaction>
</comment>
<comment type="pathway">
    <text evidence="1">Lipid metabolism; phospholipid metabolism.</text>
</comment>
<comment type="subunit">
    <text evidence="1">Probably interacts with PlsX.</text>
</comment>
<comment type="subcellular location">
    <subcellularLocation>
        <location evidence="1">Cell membrane</location>
        <topology evidence="1">Multi-pass membrane protein</topology>
    </subcellularLocation>
</comment>
<comment type="similarity">
    <text evidence="1">Belongs to the PlsY family.</text>
</comment>
<keyword id="KW-1003">Cell membrane</keyword>
<keyword id="KW-0444">Lipid biosynthesis</keyword>
<keyword id="KW-0443">Lipid metabolism</keyword>
<keyword id="KW-0472">Membrane</keyword>
<keyword id="KW-0594">Phospholipid biosynthesis</keyword>
<keyword id="KW-1208">Phospholipid metabolism</keyword>
<keyword id="KW-1185">Reference proteome</keyword>
<keyword id="KW-0808">Transferase</keyword>
<keyword id="KW-0812">Transmembrane</keyword>
<keyword id="KW-1133">Transmembrane helix</keyword>
<sequence>MIILAALLAYILGSVPFGYLTSKYLWGVDITKKGSGNIGATNVYRNLGPYPGAITAIGDVGKGMLAVYIGSLLAGERGALVASFFVVIGHAYSIFLKFHGGKIVATTFGVLIMTSIKVTVVVFFIWLTVMLISRYVSLGSIVCGLSIPLIMLLFGLDLSYIYLGIFLAVMIFYRHRDNIKRLRSGTENKIGTRKNG</sequence>
<feature type="chain" id="PRO_0000250293" description="Glycerol-3-phosphate acyltransferase">
    <location>
        <begin position="1"/>
        <end position="196"/>
    </location>
</feature>
<feature type="transmembrane region" description="Helical" evidence="1">
    <location>
        <begin position="1"/>
        <end position="21"/>
    </location>
</feature>
<feature type="transmembrane region" description="Helical" evidence="1">
    <location>
        <begin position="53"/>
        <end position="73"/>
    </location>
</feature>
<feature type="transmembrane region" description="Helical" evidence="1">
    <location>
        <begin position="78"/>
        <end position="98"/>
    </location>
</feature>
<feature type="transmembrane region" description="Helical" evidence="1">
    <location>
        <begin position="112"/>
        <end position="132"/>
    </location>
</feature>
<feature type="transmembrane region" description="Helical" evidence="1">
    <location>
        <begin position="152"/>
        <end position="172"/>
    </location>
</feature>
<gene>
    <name evidence="1" type="primary">plsY</name>
    <name type="ordered locus">CHY_1918</name>
</gene>
<organism>
    <name type="scientific">Carboxydothermus hydrogenoformans (strain ATCC BAA-161 / DSM 6008 / Z-2901)</name>
    <dbReference type="NCBI Taxonomy" id="246194"/>
    <lineage>
        <taxon>Bacteria</taxon>
        <taxon>Bacillati</taxon>
        <taxon>Bacillota</taxon>
        <taxon>Clostridia</taxon>
        <taxon>Thermoanaerobacterales</taxon>
        <taxon>Thermoanaerobacteraceae</taxon>
        <taxon>Carboxydothermus</taxon>
    </lineage>
</organism>
<proteinExistence type="inferred from homology"/>
<reference key="1">
    <citation type="journal article" date="2005" name="PLoS Genet.">
        <title>Life in hot carbon monoxide: the complete genome sequence of Carboxydothermus hydrogenoformans Z-2901.</title>
        <authorList>
            <person name="Wu M."/>
            <person name="Ren Q."/>
            <person name="Durkin A.S."/>
            <person name="Daugherty S.C."/>
            <person name="Brinkac L.M."/>
            <person name="Dodson R.J."/>
            <person name="Madupu R."/>
            <person name="Sullivan S.A."/>
            <person name="Kolonay J.F."/>
            <person name="Nelson W.C."/>
            <person name="Tallon L.J."/>
            <person name="Jones K.M."/>
            <person name="Ulrich L.E."/>
            <person name="Gonzalez J.M."/>
            <person name="Zhulin I.B."/>
            <person name="Robb F.T."/>
            <person name="Eisen J.A."/>
        </authorList>
    </citation>
    <scope>NUCLEOTIDE SEQUENCE [LARGE SCALE GENOMIC DNA]</scope>
    <source>
        <strain>ATCC BAA-161 / DSM 6008 / Z-2901</strain>
    </source>
</reference>
<dbReference type="EC" id="2.3.1.275" evidence="1"/>
<dbReference type="EMBL" id="CP000141">
    <property type="protein sequence ID" value="ABB14940.1"/>
    <property type="molecule type" value="Genomic_DNA"/>
</dbReference>
<dbReference type="RefSeq" id="WP_011344810.1">
    <property type="nucleotide sequence ID" value="NC_007503.1"/>
</dbReference>
<dbReference type="SMR" id="Q3AAU7"/>
<dbReference type="FunCoup" id="Q3AAU7">
    <property type="interactions" value="219"/>
</dbReference>
<dbReference type="STRING" id="246194.CHY_1918"/>
<dbReference type="KEGG" id="chy:CHY_1918"/>
<dbReference type="eggNOG" id="COG0344">
    <property type="taxonomic scope" value="Bacteria"/>
</dbReference>
<dbReference type="HOGENOM" id="CLU_081254_7_1_9"/>
<dbReference type="InParanoid" id="Q3AAU7"/>
<dbReference type="OrthoDB" id="9777124at2"/>
<dbReference type="UniPathway" id="UPA00085"/>
<dbReference type="Proteomes" id="UP000002706">
    <property type="component" value="Chromosome"/>
</dbReference>
<dbReference type="GO" id="GO:0005886">
    <property type="term" value="C:plasma membrane"/>
    <property type="evidence" value="ECO:0007669"/>
    <property type="project" value="UniProtKB-SubCell"/>
</dbReference>
<dbReference type="GO" id="GO:0043772">
    <property type="term" value="F:acyl-phosphate glycerol-3-phosphate acyltransferase activity"/>
    <property type="evidence" value="ECO:0007669"/>
    <property type="project" value="UniProtKB-UniRule"/>
</dbReference>
<dbReference type="GO" id="GO:0008654">
    <property type="term" value="P:phospholipid biosynthetic process"/>
    <property type="evidence" value="ECO:0007669"/>
    <property type="project" value="UniProtKB-UniRule"/>
</dbReference>
<dbReference type="HAMAP" id="MF_01043">
    <property type="entry name" value="PlsY"/>
    <property type="match status" value="1"/>
</dbReference>
<dbReference type="InterPro" id="IPR003811">
    <property type="entry name" value="G3P_acylTferase_PlsY"/>
</dbReference>
<dbReference type="NCBIfam" id="TIGR00023">
    <property type="entry name" value="glycerol-3-phosphate 1-O-acyltransferase PlsY"/>
    <property type="match status" value="1"/>
</dbReference>
<dbReference type="PANTHER" id="PTHR30309:SF0">
    <property type="entry name" value="GLYCEROL-3-PHOSPHATE ACYLTRANSFERASE-RELATED"/>
    <property type="match status" value="1"/>
</dbReference>
<dbReference type="PANTHER" id="PTHR30309">
    <property type="entry name" value="INNER MEMBRANE PROTEIN YGIH"/>
    <property type="match status" value="1"/>
</dbReference>
<dbReference type="Pfam" id="PF02660">
    <property type="entry name" value="G3P_acyltransf"/>
    <property type="match status" value="1"/>
</dbReference>
<dbReference type="SMART" id="SM01207">
    <property type="entry name" value="G3P_acyltransf"/>
    <property type="match status" value="1"/>
</dbReference>
<protein>
    <recommendedName>
        <fullName evidence="1">Glycerol-3-phosphate acyltransferase</fullName>
    </recommendedName>
    <alternativeName>
        <fullName evidence="1">Acyl-PO4 G3P acyltransferase</fullName>
    </alternativeName>
    <alternativeName>
        <fullName evidence="1">Acyl-phosphate--glycerol-3-phosphate acyltransferase</fullName>
    </alternativeName>
    <alternativeName>
        <fullName evidence="1">G3P acyltransferase</fullName>
        <shortName evidence="1">GPAT</shortName>
        <ecNumber evidence="1">2.3.1.275</ecNumber>
    </alternativeName>
    <alternativeName>
        <fullName evidence="1">Lysophosphatidic acid synthase</fullName>
        <shortName evidence="1">LPA synthase</shortName>
    </alternativeName>
</protein>
<accession>Q3AAU7</accession>
<name>PLSY_CARHZ</name>